<dbReference type="EC" id="2.7.7.7" evidence="1"/>
<dbReference type="EMBL" id="BA000031">
    <property type="protein sequence ID" value="BAC60605.1"/>
    <property type="molecule type" value="Genomic_DNA"/>
</dbReference>
<dbReference type="RefSeq" id="NP_798721.1">
    <property type="nucleotide sequence ID" value="NC_004603.1"/>
</dbReference>
<dbReference type="RefSeq" id="WP_005456663.1">
    <property type="nucleotide sequence ID" value="NC_004603.1"/>
</dbReference>
<dbReference type="SMR" id="Q87MB4"/>
<dbReference type="GeneID" id="1189855"/>
<dbReference type="KEGG" id="vpa:VP2342"/>
<dbReference type="PATRIC" id="fig|223926.6.peg.2245"/>
<dbReference type="eggNOG" id="COG0389">
    <property type="taxonomic scope" value="Bacteria"/>
</dbReference>
<dbReference type="HOGENOM" id="CLU_012348_1_2_6"/>
<dbReference type="Proteomes" id="UP000002493">
    <property type="component" value="Chromosome 1"/>
</dbReference>
<dbReference type="GO" id="GO:0005829">
    <property type="term" value="C:cytosol"/>
    <property type="evidence" value="ECO:0007669"/>
    <property type="project" value="TreeGrafter"/>
</dbReference>
<dbReference type="GO" id="GO:0003684">
    <property type="term" value="F:damaged DNA binding"/>
    <property type="evidence" value="ECO:0007669"/>
    <property type="project" value="InterPro"/>
</dbReference>
<dbReference type="GO" id="GO:0003887">
    <property type="term" value="F:DNA-directed DNA polymerase activity"/>
    <property type="evidence" value="ECO:0007669"/>
    <property type="project" value="UniProtKB-UniRule"/>
</dbReference>
<dbReference type="GO" id="GO:0000287">
    <property type="term" value="F:magnesium ion binding"/>
    <property type="evidence" value="ECO:0007669"/>
    <property type="project" value="UniProtKB-UniRule"/>
</dbReference>
<dbReference type="GO" id="GO:0006261">
    <property type="term" value="P:DNA-templated DNA replication"/>
    <property type="evidence" value="ECO:0007669"/>
    <property type="project" value="UniProtKB-UniRule"/>
</dbReference>
<dbReference type="GO" id="GO:0042276">
    <property type="term" value="P:error-prone translesion synthesis"/>
    <property type="evidence" value="ECO:0007669"/>
    <property type="project" value="TreeGrafter"/>
</dbReference>
<dbReference type="GO" id="GO:0009432">
    <property type="term" value="P:SOS response"/>
    <property type="evidence" value="ECO:0007669"/>
    <property type="project" value="TreeGrafter"/>
</dbReference>
<dbReference type="CDD" id="cd03586">
    <property type="entry name" value="PolY_Pol_IV_kappa"/>
    <property type="match status" value="1"/>
</dbReference>
<dbReference type="FunFam" id="1.10.150.20:FF:000019">
    <property type="entry name" value="DNA polymerase IV"/>
    <property type="match status" value="1"/>
</dbReference>
<dbReference type="FunFam" id="3.30.1490.100:FF:000002">
    <property type="entry name" value="DNA polymerase IV"/>
    <property type="match status" value="1"/>
</dbReference>
<dbReference type="FunFam" id="3.30.70.270:FF:000002">
    <property type="entry name" value="DNA polymerase IV"/>
    <property type="match status" value="1"/>
</dbReference>
<dbReference type="FunFam" id="3.40.1170.60:FF:000001">
    <property type="entry name" value="DNA polymerase IV"/>
    <property type="match status" value="1"/>
</dbReference>
<dbReference type="Gene3D" id="3.30.70.270">
    <property type="match status" value="1"/>
</dbReference>
<dbReference type="Gene3D" id="3.40.1170.60">
    <property type="match status" value="1"/>
</dbReference>
<dbReference type="Gene3D" id="1.10.150.20">
    <property type="entry name" value="5' to 3' exonuclease, C-terminal subdomain"/>
    <property type="match status" value="1"/>
</dbReference>
<dbReference type="Gene3D" id="3.30.1490.100">
    <property type="entry name" value="DNA polymerase, Y-family, little finger domain"/>
    <property type="match status" value="1"/>
</dbReference>
<dbReference type="HAMAP" id="MF_01113">
    <property type="entry name" value="DNApol_IV"/>
    <property type="match status" value="1"/>
</dbReference>
<dbReference type="InterPro" id="IPR043502">
    <property type="entry name" value="DNA/RNA_pol_sf"/>
</dbReference>
<dbReference type="InterPro" id="IPR036775">
    <property type="entry name" value="DNA_pol_Y-fam_lit_finger_sf"/>
</dbReference>
<dbReference type="InterPro" id="IPR017961">
    <property type="entry name" value="DNA_pol_Y-fam_little_finger"/>
</dbReference>
<dbReference type="InterPro" id="IPR050116">
    <property type="entry name" value="DNA_polymerase-Y"/>
</dbReference>
<dbReference type="InterPro" id="IPR022880">
    <property type="entry name" value="DNApol_IV"/>
</dbReference>
<dbReference type="InterPro" id="IPR053848">
    <property type="entry name" value="IMS_HHH_1"/>
</dbReference>
<dbReference type="InterPro" id="IPR043128">
    <property type="entry name" value="Rev_trsase/Diguanyl_cyclase"/>
</dbReference>
<dbReference type="InterPro" id="IPR001126">
    <property type="entry name" value="UmuC"/>
</dbReference>
<dbReference type="NCBIfam" id="NF002677">
    <property type="entry name" value="PRK02406.1"/>
    <property type="match status" value="1"/>
</dbReference>
<dbReference type="PANTHER" id="PTHR11076:SF33">
    <property type="entry name" value="DNA POLYMERASE KAPPA"/>
    <property type="match status" value="1"/>
</dbReference>
<dbReference type="PANTHER" id="PTHR11076">
    <property type="entry name" value="DNA REPAIR POLYMERASE UMUC / TRANSFERASE FAMILY MEMBER"/>
    <property type="match status" value="1"/>
</dbReference>
<dbReference type="Pfam" id="PF00817">
    <property type="entry name" value="IMS"/>
    <property type="match status" value="1"/>
</dbReference>
<dbReference type="Pfam" id="PF11799">
    <property type="entry name" value="IMS_C"/>
    <property type="match status" value="1"/>
</dbReference>
<dbReference type="Pfam" id="PF21999">
    <property type="entry name" value="IMS_HHH_1"/>
    <property type="match status" value="1"/>
</dbReference>
<dbReference type="SUPFAM" id="SSF56672">
    <property type="entry name" value="DNA/RNA polymerases"/>
    <property type="match status" value="1"/>
</dbReference>
<dbReference type="SUPFAM" id="SSF100879">
    <property type="entry name" value="Lesion bypass DNA polymerase (Y-family), little finger domain"/>
    <property type="match status" value="1"/>
</dbReference>
<dbReference type="PROSITE" id="PS50173">
    <property type="entry name" value="UMUC"/>
    <property type="match status" value="1"/>
</dbReference>
<proteinExistence type="inferred from homology"/>
<sequence length="354" mass="40465">MSERIRKIIHVDMDCFYAAVEMRDNPNYRDIALAVGGHEKQRGVISTCNYEARKFGVRSAMPTARALQLCPHLLVVPGRMHIYKQVSLQIRAIFERYTSLIEPLSLDEAYLDVTDATACRGSATLIAESIRNDIRNELGLTASAGIAPIKFLAKVASDMNKPNGQFVIPPEKVQEVVDKLPLEKIPGVGKVSLEKLHQAGFYLCEDIKNSDYRELLRQFGRQGASLWKRSHGIDDREVVVERERKSVGVERTFSQNISTYDECWQVIEEKLYPELEKRLERASPDKSIIKQGIKVKFADFQLTTIEHIHPQLELEDFKLLLKDILKRQNGREIRLLGLSVMLKPEEQARQLSFF</sequence>
<organism>
    <name type="scientific">Vibrio parahaemolyticus serotype O3:K6 (strain RIMD 2210633)</name>
    <dbReference type="NCBI Taxonomy" id="223926"/>
    <lineage>
        <taxon>Bacteria</taxon>
        <taxon>Pseudomonadati</taxon>
        <taxon>Pseudomonadota</taxon>
        <taxon>Gammaproteobacteria</taxon>
        <taxon>Vibrionales</taxon>
        <taxon>Vibrionaceae</taxon>
        <taxon>Vibrio</taxon>
    </lineage>
</organism>
<gene>
    <name evidence="1" type="primary">dinB</name>
    <name type="ordered locus">VP2342</name>
</gene>
<name>DPO4_VIBPA</name>
<accession>Q87MB4</accession>
<protein>
    <recommendedName>
        <fullName evidence="1">DNA polymerase IV</fullName>
        <shortName evidence="1">Pol IV</shortName>
        <ecNumber evidence="1">2.7.7.7</ecNumber>
    </recommendedName>
</protein>
<reference key="1">
    <citation type="journal article" date="2003" name="Lancet">
        <title>Genome sequence of Vibrio parahaemolyticus: a pathogenic mechanism distinct from that of V. cholerae.</title>
        <authorList>
            <person name="Makino K."/>
            <person name="Oshima K."/>
            <person name="Kurokawa K."/>
            <person name="Yokoyama K."/>
            <person name="Uda T."/>
            <person name="Tagomori K."/>
            <person name="Iijima Y."/>
            <person name="Najima M."/>
            <person name="Nakano M."/>
            <person name="Yamashita A."/>
            <person name="Kubota Y."/>
            <person name="Kimura S."/>
            <person name="Yasunaga T."/>
            <person name="Honda T."/>
            <person name="Shinagawa H."/>
            <person name="Hattori M."/>
            <person name="Iida T."/>
        </authorList>
    </citation>
    <scope>NUCLEOTIDE SEQUENCE [LARGE SCALE GENOMIC DNA]</scope>
    <source>
        <strain>RIMD 2210633</strain>
    </source>
</reference>
<comment type="function">
    <text evidence="1">Poorly processive, error-prone DNA polymerase involved in untargeted mutagenesis. Copies undamaged DNA at stalled replication forks, which arise in vivo from mismatched or misaligned primer ends. These misaligned primers can be extended by PolIV. Exhibits no 3'-5' exonuclease (proofreading) activity. May be involved in translesional synthesis, in conjunction with the beta clamp from PolIII.</text>
</comment>
<comment type="catalytic activity">
    <reaction evidence="1">
        <text>DNA(n) + a 2'-deoxyribonucleoside 5'-triphosphate = DNA(n+1) + diphosphate</text>
        <dbReference type="Rhea" id="RHEA:22508"/>
        <dbReference type="Rhea" id="RHEA-COMP:17339"/>
        <dbReference type="Rhea" id="RHEA-COMP:17340"/>
        <dbReference type="ChEBI" id="CHEBI:33019"/>
        <dbReference type="ChEBI" id="CHEBI:61560"/>
        <dbReference type="ChEBI" id="CHEBI:173112"/>
        <dbReference type="EC" id="2.7.7.7"/>
    </reaction>
</comment>
<comment type="cofactor">
    <cofactor evidence="1">
        <name>Mg(2+)</name>
        <dbReference type="ChEBI" id="CHEBI:18420"/>
    </cofactor>
    <text evidence="1">Binds 2 magnesium ions per subunit.</text>
</comment>
<comment type="subunit">
    <text evidence="1">Monomer.</text>
</comment>
<comment type="subcellular location">
    <subcellularLocation>
        <location evidence="1">Cytoplasm</location>
    </subcellularLocation>
</comment>
<comment type="similarity">
    <text evidence="1">Belongs to the DNA polymerase type-Y family.</text>
</comment>
<feature type="chain" id="PRO_0000173963" description="DNA polymerase IV">
    <location>
        <begin position="1"/>
        <end position="354"/>
    </location>
</feature>
<feature type="domain" description="UmuC" evidence="1">
    <location>
        <begin position="8"/>
        <end position="189"/>
    </location>
</feature>
<feature type="active site" evidence="1">
    <location>
        <position position="108"/>
    </location>
</feature>
<feature type="binding site" evidence="1">
    <location>
        <position position="12"/>
    </location>
    <ligand>
        <name>Mg(2+)</name>
        <dbReference type="ChEBI" id="CHEBI:18420"/>
    </ligand>
</feature>
<feature type="binding site" evidence="1">
    <location>
        <position position="107"/>
    </location>
    <ligand>
        <name>Mg(2+)</name>
        <dbReference type="ChEBI" id="CHEBI:18420"/>
    </ligand>
</feature>
<feature type="site" description="Substrate discrimination" evidence="1">
    <location>
        <position position="17"/>
    </location>
</feature>
<evidence type="ECO:0000255" key="1">
    <source>
        <dbReference type="HAMAP-Rule" id="MF_01113"/>
    </source>
</evidence>
<keyword id="KW-0963">Cytoplasm</keyword>
<keyword id="KW-0227">DNA damage</keyword>
<keyword id="KW-0234">DNA repair</keyword>
<keyword id="KW-0235">DNA replication</keyword>
<keyword id="KW-0238">DNA-binding</keyword>
<keyword id="KW-0239">DNA-directed DNA polymerase</keyword>
<keyword id="KW-0460">Magnesium</keyword>
<keyword id="KW-0479">Metal-binding</keyword>
<keyword id="KW-0515">Mutator protein</keyword>
<keyword id="KW-0548">Nucleotidyltransferase</keyword>
<keyword id="KW-0808">Transferase</keyword>